<name>CDT1_ORYSJ</name>
<keyword id="KW-1003">Cell membrane</keyword>
<keyword id="KW-0134">Cell wall</keyword>
<keyword id="KW-0472">Membrane</keyword>
<keyword id="KW-0479">Metal-binding</keyword>
<keyword id="KW-1185">Reference proteome</keyword>
<keyword id="KW-0964">Secreted</keyword>
<keyword id="KW-0346">Stress response</keyword>
<keyword id="KW-0812">Transmembrane</keyword>
<keyword id="KW-1133">Transmembrane helix</keyword>
<accession>Q5VSB5</accession>
<accession>A0A0P0WSX6</accession>
<accession>B9FRF8</accession>
<sequence>MYNAPMAQDMSYYEHVQRRHEEKGCLYACIFTALCCFCCYETCECCLDCLCCCCN</sequence>
<reference key="1">
    <citation type="journal article" date="2005" name="Nature">
        <title>The map-based sequence of the rice genome.</title>
        <authorList>
            <consortium name="International rice genome sequencing project (IRGSP)"/>
        </authorList>
    </citation>
    <scope>NUCLEOTIDE SEQUENCE [LARGE SCALE GENOMIC DNA]</scope>
    <source>
        <strain>cv. Nipponbare</strain>
    </source>
</reference>
<reference key="2">
    <citation type="journal article" date="2008" name="Nucleic Acids Res.">
        <title>The rice annotation project database (RAP-DB): 2008 update.</title>
        <authorList>
            <consortium name="The rice annotation project (RAP)"/>
        </authorList>
    </citation>
    <scope>GENOME REANNOTATION</scope>
    <source>
        <strain>cv. Nipponbare</strain>
    </source>
</reference>
<reference key="3">
    <citation type="journal article" date="2013" name="Rice">
        <title>Improvement of the Oryza sativa Nipponbare reference genome using next generation sequence and optical map data.</title>
        <authorList>
            <person name="Kawahara Y."/>
            <person name="de la Bastide M."/>
            <person name="Hamilton J.P."/>
            <person name="Kanamori H."/>
            <person name="McCombie W.R."/>
            <person name="Ouyang S."/>
            <person name="Schwartz D.C."/>
            <person name="Tanaka T."/>
            <person name="Wu J."/>
            <person name="Zhou S."/>
            <person name="Childs K.L."/>
            <person name="Davidson R.M."/>
            <person name="Lin H."/>
            <person name="Quesada-Ocampo L."/>
            <person name="Vaillancourt B."/>
            <person name="Sakai H."/>
            <person name="Lee S.S."/>
            <person name="Kim J."/>
            <person name="Numa H."/>
            <person name="Itoh T."/>
            <person name="Buell C.R."/>
            <person name="Matsumoto T."/>
        </authorList>
    </citation>
    <scope>GENOME REANNOTATION</scope>
    <source>
        <strain>cv. Nipponbare</strain>
    </source>
</reference>
<reference key="4">
    <citation type="journal article" date="2005" name="PLoS Biol.">
        <title>The genomes of Oryza sativa: a history of duplications.</title>
        <authorList>
            <person name="Yu J."/>
            <person name="Wang J."/>
            <person name="Lin W."/>
            <person name="Li S."/>
            <person name="Li H."/>
            <person name="Zhou J."/>
            <person name="Ni P."/>
            <person name="Dong W."/>
            <person name="Hu S."/>
            <person name="Zeng C."/>
            <person name="Zhang J."/>
            <person name="Zhang Y."/>
            <person name="Li R."/>
            <person name="Xu Z."/>
            <person name="Li S."/>
            <person name="Li X."/>
            <person name="Zheng H."/>
            <person name="Cong L."/>
            <person name="Lin L."/>
            <person name="Yin J."/>
            <person name="Geng J."/>
            <person name="Li G."/>
            <person name="Shi J."/>
            <person name="Liu J."/>
            <person name="Lv H."/>
            <person name="Li J."/>
            <person name="Wang J."/>
            <person name="Deng Y."/>
            <person name="Ran L."/>
            <person name="Shi X."/>
            <person name="Wang X."/>
            <person name="Wu Q."/>
            <person name="Li C."/>
            <person name="Ren X."/>
            <person name="Wang J."/>
            <person name="Wang X."/>
            <person name="Li D."/>
            <person name="Liu D."/>
            <person name="Zhang X."/>
            <person name="Ji Z."/>
            <person name="Zhao W."/>
            <person name="Sun Y."/>
            <person name="Zhang Z."/>
            <person name="Bao J."/>
            <person name="Han Y."/>
            <person name="Dong L."/>
            <person name="Ji J."/>
            <person name="Chen P."/>
            <person name="Wu S."/>
            <person name="Liu J."/>
            <person name="Xiao Y."/>
            <person name="Bu D."/>
            <person name="Tan J."/>
            <person name="Yang L."/>
            <person name="Ye C."/>
            <person name="Zhang J."/>
            <person name="Xu J."/>
            <person name="Zhou Y."/>
            <person name="Yu Y."/>
            <person name="Zhang B."/>
            <person name="Zhuang S."/>
            <person name="Wei H."/>
            <person name="Liu B."/>
            <person name="Lei M."/>
            <person name="Yu H."/>
            <person name="Li Y."/>
            <person name="Xu H."/>
            <person name="Wei S."/>
            <person name="He X."/>
            <person name="Fang L."/>
            <person name="Zhang Z."/>
            <person name="Zhang Y."/>
            <person name="Huang X."/>
            <person name="Su Z."/>
            <person name="Tong W."/>
            <person name="Li J."/>
            <person name="Tong Z."/>
            <person name="Li S."/>
            <person name="Ye J."/>
            <person name="Wang L."/>
            <person name="Fang L."/>
            <person name="Lei T."/>
            <person name="Chen C.-S."/>
            <person name="Chen H.-C."/>
            <person name="Xu Z."/>
            <person name="Li H."/>
            <person name="Huang H."/>
            <person name="Zhang F."/>
            <person name="Xu H."/>
            <person name="Li N."/>
            <person name="Zhao C."/>
            <person name="Li S."/>
            <person name="Dong L."/>
            <person name="Huang Y."/>
            <person name="Li L."/>
            <person name="Xi Y."/>
            <person name="Qi Q."/>
            <person name="Li W."/>
            <person name="Zhang B."/>
            <person name="Hu W."/>
            <person name="Zhang Y."/>
            <person name="Tian X."/>
            <person name="Jiao Y."/>
            <person name="Liang X."/>
            <person name="Jin J."/>
            <person name="Gao L."/>
            <person name="Zheng W."/>
            <person name="Hao B."/>
            <person name="Liu S.-M."/>
            <person name="Wang W."/>
            <person name="Yuan L."/>
            <person name="Cao M."/>
            <person name="McDermott J."/>
            <person name="Samudrala R."/>
            <person name="Wang J."/>
            <person name="Wong G.K.-S."/>
            <person name="Yang H."/>
        </authorList>
    </citation>
    <scope>NUCLEOTIDE SEQUENCE [LARGE SCALE GENOMIC DNA]</scope>
    <source>
        <strain>cv. Nipponbare</strain>
    </source>
</reference>
<reference key="5">
    <citation type="journal article" date="2003" name="Science">
        <title>Collection, mapping, and annotation of over 28,000 cDNA clones from japonica rice.</title>
        <authorList>
            <consortium name="The rice full-length cDNA consortium"/>
        </authorList>
    </citation>
    <scope>NUCLEOTIDE SEQUENCE [LARGE SCALE MRNA]</scope>
    <source>
        <strain>cv. Nipponbare</strain>
    </source>
</reference>
<reference key="6">
    <citation type="journal article" date="2009" name="Plant Cell Physiol.">
        <title>Novel cysteine-rich peptides from Digitaria ciliaris and Oryza sativa enhance tolerance to cadmium by limiting its cellular accumulation.</title>
        <authorList>
            <person name="Kuramata M."/>
            <person name="Masuya S."/>
            <person name="Takahashi Y."/>
            <person name="Kitagawa E."/>
            <person name="Inoue C."/>
            <person name="Ishikawa S."/>
            <person name="Youssefian S."/>
            <person name="Kusano T."/>
        </authorList>
    </citation>
    <scope>FUNCTION</scope>
    <scope>TISSUE SPECIFICITY</scope>
    <scope>INDUCTION BY CADMIUM</scope>
    <scope>SUBCELLULAR LOCATION</scope>
    <scope>GENE FAMILY</scope>
    <scope>NOMENCLATURE</scope>
</reference>
<reference key="7">
    <citation type="journal article" date="2009" name="Plant Signal. Behav.">
        <title>A novel plant cysteine-rich peptide family conferring cadmium tolerance to yeast and plants.</title>
        <authorList>
            <person name="Matsuda T."/>
            <person name="Kuramata M."/>
            <person name="Takahashi Y."/>
            <person name="Kitagawa E."/>
            <person name="Youssefian S."/>
            <person name="Kusano T."/>
        </authorList>
    </citation>
    <scope>FUNCTION</scope>
    <scope>GENE FAMILY</scope>
</reference>
<reference key="8">
    <citation type="journal article" date="2013" name="Plant J.">
        <title>A plasma membrane-localized small peptide is involved in rice aluminium tolerance.</title>
        <authorList>
            <person name="Xia J."/>
            <person name="Yamaji N."/>
            <person name="Ma J.F."/>
        </authorList>
    </citation>
    <scope>FUNCTION</scope>
    <source>
        <strain>cv. Nipponbare</strain>
    </source>
</reference>
<comment type="function">
    <text evidence="2 3 4">Confers resistance to heavy metal ions (e.g. cadmium (CdCl(2)) and copper (CuCl(2))) by chelating them at the plasma membrane of root cells, thus stopping their entry and reducing their accumulation (PubMed:19017626, PubMed:19816106). Binds to aluminium (Al) (PubMed:23888867).</text>
</comment>
<comment type="subcellular location">
    <subcellularLocation>
        <location evidence="2">Cell membrane</location>
        <topology evidence="1">Single-pass membrane protein</topology>
    </subcellularLocation>
    <subcellularLocation>
        <location evidence="2">Secreted</location>
        <location evidence="2">Cell wall</location>
    </subcellularLocation>
</comment>
<comment type="tissue specificity">
    <text evidence="2">Expressed in roots and shoots.</text>
</comment>
<comment type="induction">
    <text evidence="2">Down-regulated in root tissues but up-regulated in shoot tissues in response to cadmium (CdCl(2)).</text>
</comment>
<comment type="similarity">
    <text evidence="6">Belongs to the CYSTM1 family.</text>
</comment>
<comment type="sequence caution" evidence="6">
    <conflict type="erroneous initiation">
        <sequence resource="EMBL-CDS" id="EEE65069"/>
    </conflict>
    <text>Truncated N-terminus.</text>
</comment>
<dbReference type="EMBL" id="AP000399">
    <property type="protein sequence ID" value="BAD67660.1"/>
    <property type="molecule type" value="Genomic_DNA"/>
</dbReference>
<dbReference type="EMBL" id="AP014962">
    <property type="protein sequence ID" value="BAS96111.1"/>
    <property type="molecule type" value="Genomic_DNA"/>
</dbReference>
<dbReference type="EMBL" id="CM000143">
    <property type="protein sequence ID" value="EEE65069.1"/>
    <property type="status" value="ALT_INIT"/>
    <property type="molecule type" value="Genomic_DNA"/>
</dbReference>
<dbReference type="EMBL" id="AK121057">
    <property type="status" value="NOT_ANNOTATED_CDS"/>
    <property type="molecule type" value="mRNA"/>
</dbReference>
<dbReference type="FunCoup" id="Q5VSB5">
    <property type="interactions" value="2"/>
</dbReference>
<dbReference type="PaxDb" id="39947-Q5VSB5"/>
<dbReference type="EnsemblPlants" id="Os06t0143100-02">
    <property type="protein sequence ID" value="Os06t0143100-02"/>
    <property type="gene ID" value="Os06g0143100"/>
</dbReference>
<dbReference type="Gramene" id="Os06t0143100-02">
    <property type="protein sequence ID" value="Os06t0143100-02"/>
    <property type="gene ID" value="Os06g0143100"/>
</dbReference>
<dbReference type="eggNOG" id="ENOG502S75V">
    <property type="taxonomic scope" value="Eukaryota"/>
</dbReference>
<dbReference type="HOGENOM" id="CLU_156676_2_0_1"/>
<dbReference type="InParanoid" id="Q5VSB5"/>
<dbReference type="Proteomes" id="UP000000763">
    <property type="component" value="Chromosome 6"/>
</dbReference>
<dbReference type="Proteomes" id="UP000007752">
    <property type="component" value="Chromosome 6"/>
</dbReference>
<dbReference type="Proteomes" id="UP000059680">
    <property type="component" value="Chromosome 6"/>
</dbReference>
<dbReference type="ExpressionAtlas" id="Q5VSB5">
    <property type="expression patterns" value="baseline and differential"/>
</dbReference>
<dbReference type="GO" id="GO:0005576">
    <property type="term" value="C:extracellular region"/>
    <property type="evidence" value="ECO:0007669"/>
    <property type="project" value="UniProtKB-KW"/>
</dbReference>
<dbReference type="GO" id="GO:0009505">
    <property type="term" value="C:plant-type cell wall"/>
    <property type="evidence" value="ECO:0000314"/>
    <property type="project" value="UniProtKB"/>
</dbReference>
<dbReference type="GO" id="GO:0005886">
    <property type="term" value="C:plasma membrane"/>
    <property type="evidence" value="ECO:0000314"/>
    <property type="project" value="UniProtKB"/>
</dbReference>
<dbReference type="GO" id="GO:0046872">
    <property type="term" value="F:metal ion binding"/>
    <property type="evidence" value="ECO:0000314"/>
    <property type="project" value="UniProtKB"/>
</dbReference>
<dbReference type="GO" id="GO:0140487">
    <property type="term" value="F:metal ion sequestering activity"/>
    <property type="evidence" value="ECO:0000250"/>
    <property type="project" value="UniProtKB"/>
</dbReference>
<dbReference type="GO" id="GO:1990748">
    <property type="term" value="P:cellular detoxification"/>
    <property type="evidence" value="ECO:0000250"/>
    <property type="project" value="UniProtKB"/>
</dbReference>
<dbReference type="GO" id="GO:0071585">
    <property type="term" value="P:detoxification of cadmium ion"/>
    <property type="evidence" value="ECO:0000314"/>
    <property type="project" value="UniProtKB"/>
</dbReference>
<dbReference type="GO" id="GO:0010273">
    <property type="term" value="P:detoxification of copper ion"/>
    <property type="evidence" value="ECO:0000314"/>
    <property type="project" value="UniProtKB"/>
</dbReference>
<dbReference type="GO" id="GO:0046686">
    <property type="term" value="P:response to cadmium ion"/>
    <property type="evidence" value="ECO:0000270"/>
    <property type="project" value="UniProtKB"/>
</dbReference>
<dbReference type="InterPro" id="IPR051671">
    <property type="entry name" value="CYSTM1_HM_Tolerance"/>
</dbReference>
<dbReference type="InterPro" id="IPR028144">
    <property type="entry name" value="CYSTM_dom"/>
</dbReference>
<dbReference type="PANTHER" id="PTHR35470">
    <property type="entry name" value="CADMIUM TOLERANT 3"/>
    <property type="match status" value="1"/>
</dbReference>
<dbReference type="PANTHER" id="PTHR35470:SF12">
    <property type="entry name" value="PROTEIN CADMIUM TOLERANCE 1"/>
    <property type="match status" value="1"/>
</dbReference>
<dbReference type="Pfam" id="PF12734">
    <property type="entry name" value="CYSTM"/>
    <property type="match status" value="1"/>
</dbReference>
<evidence type="ECO:0000255" key="1"/>
<evidence type="ECO:0000269" key="2">
    <source>
    </source>
</evidence>
<evidence type="ECO:0000269" key="3">
    <source>
    </source>
</evidence>
<evidence type="ECO:0000269" key="4">
    <source>
    </source>
</evidence>
<evidence type="ECO:0000303" key="5">
    <source>
    </source>
</evidence>
<evidence type="ECO:0000305" key="6"/>
<evidence type="ECO:0000312" key="7">
    <source>
        <dbReference type="EMBL" id="BAD67660.1"/>
    </source>
</evidence>
<evidence type="ECO:0000312" key="8">
    <source>
        <dbReference type="EMBL" id="BAS96111.1"/>
    </source>
</evidence>
<evidence type="ECO:0000312" key="9">
    <source>
        <dbReference type="EMBL" id="EEE65069.1"/>
    </source>
</evidence>
<feature type="chain" id="PRO_0000454813" description="Protein CADMIUM TOLERANCE 1">
    <location>
        <begin position="1"/>
        <end position="55"/>
    </location>
</feature>
<feature type="transmembrane region" description="Helical" evidence="1">
    <location>
        <begin position="24"/>
        <end position="40"/>
    </location>
</feature>
<feature type="sequence conflict" description="In Ref. 5; AK121057." evidence="6" ref="5">
    <original>H</original>
    <variation>Y</variation>
    <location>
        <position position="15"/>
    </location>
</feature>
<gene>
    <name evidence="5" type="primary">CDT1</name>
    <name evidence="8" type="ordered locus">Os06g0143100</name>
    <name evidence="9" type="ORF">OsJ_20092</name>
    <name evidence="8" type="ORF">OSNPB_060143100</name>
    <name evidence="7" type="ORF">P0535G04.32-2</name>
</gene>
<proteinExistence type="evidence at transcript level"/>
<organism>
    <name type="scientific">Oryza sativa subsp. japonica</name>
    <name type="common">Rice</name>
    <dbReference type="NCBI Taxonomy" id="39947"/>
    <lineage>
        <taxon>Eukaryota</taxon>
        <taxon>Viridiplantae</taxon>
        <taxon>Streptophyta</taxon>
        <taxon>Embryophyta</taxon>
        <taxon>Tracheophyta</taxon>
        <taxon>Spermatophyta</taxon>
        <taxon>Magnoliopsida</taxon>
        <taxon>Liliopsida</taxon>
        <taxon>Poales</taxon>
        <taxon>Poaceae</taxon>
        <taxon>BOP clade</taxon>
        <taxon>Oryzoideae</taxon>
        <taxon>Oryzeae</taxon>
        <taxon>Oryzinae</taxon>
        <taxon>Oryza</taxon>
        <taxon>Oryza sativa</taxon>
    </lineage>
</organism>
<protein>
    <recommendedName>
        <fullName evidence="5">Protein CADMIUM TOLERANCE 1</fullName>
        <shortName evidence="5">Cd tolerant 1</shortName>
        <shortName evidence="5">OsCDT1</shortName>
    </recommendedName>
</protein>